<evidence type="ECO:0000250" key="1"/>
<evidence type="ECO:0000255" key="2"/>
<evidence type="ECO:0000255" key="3">
    <source>
        <dbReference type="PROSITE-ProRule" id="PRU00581"/>
    </source>
</evidence>
<evidence type="ECO:0000269" key="4">
    <source>
    </source>
</evidence>
<evidence type="ECO:0000305" key="5">
    <source>
    </source>
</evidence>
<evidence type="ECO:0007744" key="6">
    <source>
    </source>
</evidence>
<organism>
    <name type="scientific">Homo sapiens</name>
    <name type="common">Human</name>
    <dbReference type="NCBI Taxonomy" id="9606"/>
    <lineage>
        <taxon>Eukaryota</taxon>
        <taxon>Metazoa</taxon>
        <taxon>Chordata</taxon>
        <taxon>Craniata</taxon>
        <taxon>Vertebrata</taxon>
        <taxon>Euteleostomi</taxon>
        <taxon>Mammalia</taxon>
        <taxon>Eutheria</taxon>
        <taxon>Euarchontoglires</taxon>
        <taxon>Primates</taxon>
        <taxon>Haplorrhini</taxon>
        <taxon>Catarrhini</taxon>
        <taxon>Hominidae</taxon>
        <taxon>Homo</taxon>
    </lineage>
</organism>
<protein>
    <recommendedName>
        <fullName>MARVEL domain-containing protein 1</fullName>
    </recommendedName>
</protein>
<comment type="function">
    <text evidence="1">Microtubule-associated protein that exhibits cell cycle-dependent localization and can inhibit cell proliferation and migration.</text>
</comment>
<comment type="subcellular location">
    <subcellularLocation>
        <location evidence="1">Cell membrane</location>
        <topology evidence="1">Multi-pass membrane protein</topology>
    </subcellularLocation>
    <subcellularLocation>
        <location evidence="1">Cytoplasm</location>
        <location evidence="1">Cytoskeleton</location>
    </subcellularLocation>
    <subcellularLocation>
        <location evidence="4">Nucleus</location>
    </subcellularLocation>
    <text evidence="1">Observed in the nucleus and at the perinuclear region during interphase, but localizes at the mitotic spindle and midbody at metaphase. A significant fraction of MARVELD1 translocates to the plasma membrane during anaphase or upon microtubule depolymerization (By similarity).</text>
</comment>
<comment type="tissue specificity">
    <text evidence="4">Widely expressed in normal tissues. Down-regulated in multiple primary tumors.</text>
</comment>
<comment type="miscellaneous">
    <text evidence="5">Down-regulated in primary multiple tumors derived from ovary, vulva, uterus, cervix, breast, testis, kidney bladder and liver. The reduced expression is owing to DNA methylation and could be reversed by pharmacologic demethylation (PubMed:19364627).</text>
</comment>
<keyword id="KW-0007">Acetylation</keyword>
<keyword id="KW-0131">Cell cycle</keyword>
<keyword id="KW-1003">Cell membrane</keyword>
<keyword id="KW-0963">Cytoplasm</keyword>
<keyword id="KW-0206">Cytoskeleton</keyword>
<keyword id="KW-0472">Membrane</keyword>
<keyword id="KW-0539">Nucleus</keyword>
<keyword id="KW-1267">Proteomics identification</keyword>
<keyword id="KW-1185">Reference proteome</keyword>
<keyword id="KW-0812">Transmembrane</keyword>
<keyword id="KW-1133">Transmembrane helix</keyword>
<reference key="1">
    <citation type="journal article" date="2004" name="Nature">
        <title>The DNA sequence and comparative analysis of human chromosome 10.</title>
        <authorList>
            <person name="Deloukas P."/>
            <person name="Earthrowl M.E."/>
            <person name="Grafham D.V."/>
            <person name="Rubenfield M."/>
            <person name="French L."/>
            <person name="Steward C.A."/>
            <person name="Sims S.K."/>
            <person name="Jones M.C."/>
            <person name="Searle S."/>
            <person name="Scott C."/>
            <person name="Howe K."/>
            <person name="Hunt S.E."/>
            <person name="Andrews T.D."/>
            <person name="Gilbert J.G.R."/>
            <person name="Swarbreck D."/>
            <person name="Ashurst J.L."/>
            <person name="Taylor A."/>
            <person name="Battles J."/>
            <person name="Bird C.P."/>
            <person name="Ainscough R."/>
            <person name="Almeida J.P."/>
            <person name="Ashwell R.I.S."/>
            <person name="Ambrose K.D."/>
            <person name="Babbage A.K."/>
            <person name="Bagguley C.L."/>
            <person name="Bailey J."/>
            <person name="Banerjee R."/>
            <person name="Bates K."/>
            <person name="Beasley H."/>
            <person name="Bray-Allen S."/>
            <person name="Brown A.J."/>
            <person name="Brown J.Y."/>
            <person name="Burford D.C."/>
            <person name="Burrill W."/>
            <person name="Burton J."/>
            <person name="Cahill P."/>
            <person name="Camire D."/>
            <person name="Carter N.P."/>
            <person name="Chapman J.C."/>
            <person name="Clark S.Y."/>
            <person name="Clarke G."/>
            <person name="Clee C.M."/>
            <person name="Clegg S."/>
            <person name="Corby N."/>
            <person name="Coulson A."/>
            <person name="Dhami P."/>
            <person name="Dutta I."/>
            <person name="Dunn M."/>
            <person name="Faulkner L."/>
            <person name="Frankish A."/>
            <person name="Frankland J.A."/>
            <person name="Garner P."/>
            <person name="Garnett J."/>
            <person name="Gribble S."/>
            <person name="Griffiths C."/>
            <person name="Grocock R."/>
            <person name="Gustafson E."/>
            <person name="Hammond S."/>
            <person name="Harley J.L."/>
            <person name="Hart E."/>
            <person name="Heath P.D."/>
            <person name="Ho T.P."/>
            <person name="Hopkins B."/>
            <person name="Horne J."/>
            <person name="Howden P.J."/>
            <person name="Huckle E."/>
            <person name="Hynds C."/>
            <person name="Johnson C."/>
            <person name="Johnson D."/>
            <person name="Kana A."/>
            <person name="Kay M."/>
            <person name="Kimberley A.M."/>
            <person name="Kershaw J.K."/>
            <person name="Kokkinaki M."/>
            <person name="Laird G.K."/>
            <person name="Lawlor S."/>
            <person name="Lee H.M."/>
            <person name="Leongamornlert D.A."/>
            <person name="Laird G."/>
            <person name="Lloyd C."/>
            <person name="Lloyd D.M."/>
            <person name="Loveland J."/>
            <person name="Lovell J."/>
            <person name="McLaren S."/>
            <person name="McLay K.E."/>
            <person name="McMurray A."/>
            <person name="Mashreghi-Mohammadi M."/>
            <person name="Matthews L."/>
            <person name="Milne S."/>
            <person name="Nickerson T."/>
            <person name="Nguyen M."/>
            <person name="Overton-Larty E."/>
            <person name="Palmer S.A."/>
            <person name="Pearce A.V."/>
            <person name="Peck A.I."/>
            <person name="Pelan S."/>
            <person name="Phillimore B."/>
            <person name="Porter K."/>
            <person name="Rice C.M."/>
            <person name="Rogosin A."/>
            <person name="Ross M.T."/>
            <person name="Sarafidou T."/>
            <person name="Sehra H.K."/>
            <person name="Shownkeen R."/>
            <person name="Skuce C.D."/>
            <person name="Smith M."/>
            <person name="Standring L."/>
            <person name="Sycamore N."/>
            <person name="Tester J."/>
            <person name="Thorpe A."/>
            <person name="Torcasso W."/>
            <person name="Tracey A."/>
            <person name="Tromans A."/>
            <person name="Tsolas J."/>
            <person name="Wall M."/>
            <person name="Walsh J."/>
            <person name="Wang H."/>
            <person name="Weinstock K."/>
            <person name="West A.P."/>
            <person name="Willey D.L."/>
            <person name="Whitehead S.L."/>
            <person name="Wilming L."/>
            <person name="Wray P.W."/>
            <person name="Young L."/>
            <person name="Chen Y."/>
            <person name="Lovering R.C."/>
            <person name="Moschonas N.K."/>
            <person name="Siebert R."/>
            <person name="Fechtel K."/>
            <person name="Bentley D."/>
            <person name="Durbin R.M."/>
            <person name="Hubbard T."/>
            <person name="Doucette-Stamm L."/>
            <person name="Beck S."/>
            <person name="Smith D.R."/>
            <person name="Rogers J."/>
        </authorList>
    </citation>
    <scope>NUCLEOTIDE SEQUENCE [LARGE SCALE GENOMIC DNA]</scope>
</reference>
<reference key="2">
    <citation type="journal article" date="2004" name="Genome Res.">
        <title>The status, quality, and expansion of the NIH full-length cDNA project: the Mammalian Gene Collection (MGC).</title>
        <authorList>
            <consortium name="The MGC Project Team"/>
        </authorList>
    </citation>
    <scope>NUCLEOTIDE SEQUENCE [LARGE SCALE MRNA]</scope>
    <source>
        <tissue>Brain</tissue>
        <tissue>Kidney</tissue>
    </source>
</reference>
<reference key="3">
    <citation type="journal article" date="2009" name="Cancer Lett.">
        <title>Identification and characterization of MARVELD1, a novel nuclear protein that is down-regulated in multiple cancers and silenced by DNA methylation.</title>
        <authorList>
            <person name="Wang S."/>
            <person name="Li Y."/>
            <person name="Han F."/>
            <person name="Hu J."/>
            <person name="Yue L."/>
            <person name="Yu Y."/>
            <person name="Zhang Y."/>
            <person name="He J."/>
            <person name="Zheng H."/>
            <person name="Shi S."/>
            <person name="Fu X."/>
            <person name="Wu H."/>
        </authorList>
    </citation>
    <scope>SUBCELLULAR LOCATION</scope>
    <scope>TISSUE SPECIFICITY</scope>
</reference>
<reference key="4">
    <citation type="journal article" date="2012" name="Mol. Cell. Proteomics">
        <title>Comparative large-scale characterisation of plant vs. mammal proteins reveals similar and idiosyncratic N-alpha acetylation features.</title>
        <authorList>
            <person name="Bienvenut W.V."/>
            <person name="Sumpton D."/>
            <person name="Martinez A."/>
            <person name="Lilla S."/>
            <person name="Espagne C."/>
            <person name="Meinnel T."/>
            <person name="Giglione C."/>
        </authorList>
    </citation>
    <scope>ACETYLATION [LARGE SCALE ANALYSIS] AT MET-1</scope>
    <scope>IDENTIFICATION BY MASS SPECTROMETRY [LARGE SCALE ANALYSIS]</scope>
</reference>
<dbReference type="EMBL" id="AL355315">
    <property type="status" value="NOT_ANNOTATED_CDS"/>
    <property type="molecule type" value="Genomic_DNA"/>
</dbReference>
<dbReference type="EMBL" id="BC004995">
    <property type="status" value="NOT_ANNOTATED_CDS"/>
    <property type="molecule type" value="mRNA"/>
</dbReference>
<dbReference type="EMBL" id="BC062544">
    <property type="status" value="NOT_ANNOTATED_CDS"/>
    <property type="molecule type" value="mRNA"/>
</dbReference>
<dbReference type="RefSeq" id="NP_113672.1">
    <property type="nucleotide sequence ID" value="NM_031484.4"/>
</dbReference>
<dbReference type="SMR" id="Q9BSK0"/>
<dbReference type="BioGRID" id="123750">
    <property type="interactions" value="2"/>
</dbReference>
<dbReference type="FunCoup" id="Q9BSK0">
    <property type="interactions" value="44"/>
</dbReference>
<dbReference type="IntAct" id="Q9BSK0">
    <property type="interactions" value="1"/>
</dbReference>
<dbReference type="STRING" id="9606.ENSP00000441365"/>
<dbReference type="iPTMnet" id="Q9BSK0"/>
<dbReference type="PhosphoSitePlus" id="Q9BSK0"/>
<dbReference type="SwissPalm" id="Q9BSK0"/>
<dbReference type="BioMuta" id="MARVELD1"/>
<dbReference type="DMDM" id="74752303"/>
<dbReference type="jPOST" id="Q9BSK0"/>
<dbReference type="MassIVE" id="Q9BSK0"/>
<dbReference type="PaxDb" id="9606-ENSP00000441365"/>
<dbReference type="PeptideAtlas" id="Q9BSK0"/>
<dbReference type="ProteomicsDB" id="78908"/>
<dbReference type="Pumba" id="Q9BSK0"/>
<dbReference type="Antibodypedia" id="56528">
    <property type="antibodies" value="74 antibodies from 20 providers"/>
</dbReference>
<dbReference type="DNASU" id="83742"/>
<dbReference type="Ensembl" id="ENST00000285605.8">
    <property type="protein sequence ID" value="ENSP00000441365.1"/>
    <property type="gene ID" value="ENSG00000155254.13"/>
</dbReference>
<dbReference type="GeneID" id="83742"/>
<dbReference type="KEGG" id="hsa:83742"/>
<dbReference type="MANE-Select" id="ENST00000285605.8">
    <property type="protein sequence ID" value="ENSP00000441365.1"/>
    <property type="RefSeq nucleotide sequence ID" value="NM_031484.4"/>
    <property type="RefSeq protein sequence ID" value="NP_113672.1"/>
</dbReference>
<dbReference type="UCSC" id="uc001koj.5">
    <property type="organism name" value="human"/>
</dbReference>
<dbReference type="AGR" id="HGNC:28674"/>
<dbReference type="CTD" id="83742"/>
<dbReference type="DisGeNET" id="83742"/>
<dbReference type="GeneCards" id="MARVELD1"/>
<dbReference type="HGNC" id="HGNC:28674">
    <property type="gene designation" value="MARVELD1"/>
</dbReference>
<dbReference type="HPA" id="ENSG00000155254">
    <property type="expression patterns" value="Low tissue specificity"/>
</dbReference>
<dbReference type="neXtProt" id="NX_Q9BSK0"/>
<dbReference type="OpenTargets" id="ENSG00000155254"/>
<dbReference type="PharmGKB" id="PA134937190"/>
<dbReference type="VEuPathDB" id="HostDB:ENSG00000155254"/>
<dbReference type="eggNOG" id="KOG4788">
    <property type="taxonomic scope" value="Eukaryota"/>
</dbReference>
<dbReference type="GeneTree" id="ENSGT00510000049375"/>
<dbReference type="HOGENOM" id="CLU_138621_0_0_1"/>
<dbReference type="InParanoid" id="Q9BSK0"/>
<dbReference type="OMA" id="AAHKYEG"/>
<dbReference type="OrthoDB" id="9938733at2759"/>
<dbReference type="PAN-GO" id="Q9BSK0">
    <property type="GO annotations" value="3 GO annotations based on evolutionary models"/>
</dbReference>
<dbReference type="PhylomeDB" id="Q9BSK0"/>
<dbReference type="TreeFam" id="TF316174"/>
<dbReference type="PathwayCommons" id="Q9BSK0"/>
<dbReference type="SignaLink" id="Q9BSK0"/>
<dbReference type="BioGRID-ORCS" id="83742">
    <property type="hits" value="9 hits in 316 CRISPR screens"/>
</dbReference>
<dbReference type="GenomeRNAi" id="83742"/>
<dbReference type="Pharos" id="Q9BSK0">
    <property type="development level" value="Tbio"/>
</dbReference>
<dbReference type="PRO" id="PR:Q9BSK0"/>
<dbReference type="Proteomes" id="UP000005640">
    <property type="component" value="Chromosome 10"/>
</dbReference>
<dbReference type="RNAct" id="Q9BSK0">
    <property type="molecule type" value="protein"/>
</dbReference>
<dbReference type="Bgee" id="ENSG00000155254">
    <property type="expression patterns" value="Expressed in upper arm skin and 184 other cell types or tissues"/>
</dbReference>
<dbReference type="GO" id="GO:0005737">
    <property type="term" value="C:cytoplasm"/>
    <property type="evidence" value="ECO:0007669"/>
    <property type="project" value="UniProtKB-KW"/>
</dbReference>
<dbReference type="GO" id="GO:0005856">
    <property type="term" value="C:cytoskeleton"/>
    <property type="evidence" value="ECO:0007669"/>
    <property type="project" value="UniProtKB-SubCell"/>
</dbReference>
<dbReference type="GO" id="GO:0016020">
    <property type="term" value="C:membrane"/>
    <property type="evidence" value="ECO:0000318"/>
    <property type="project" value="GO_Central"/>
</dbReference>
<dbReference type="GO" id="GO:0005634">
    <property type="term" value="C:nucleus"/>
    <property type="evidence" value="ECO:0007669"/>
    <property type="project" value="UniProtKB-SubCell"/>
</dbReference>
<dbReference type="GO" id="GO:0005886">
    <property type="term" value="C:plasma membrane"/>
    <property type="evidence" value="ECO:0007669"/>
    <property type="project" value="UniProtKB-SubCell"/>
</dbReference>
<dbReference type="GO" id="GO:0019911">
    <property type="term" value="F:structural constituent of myelin sheath"/>
    <property type="evidence" value="ECO:0000318"/>
    <property type="project" value="GO_Central"/>
</dbReference>
<dbReference type="GO" id="GO:0042552">
    <property type="term" value="P:myelination"/>
    <property type="evidence" value="ECO:0000318"/>
    <property type="project" value="GO_Central"/>
</dbReference>
<dbReference type="InterPro" id="IPR008253">
    <property type="entry name" value="Marvel"/>
</dbReference>
<dbReference type="InterPro" id="IPR050578">
    <property type="entry name" value="MARVEL-CKLF_proteins"/>
</dbReference>
<dbReference type="PANTHER" id="PTHR22776:SF28">
    <property type="entry name" value="MARVEL DOMAIN-CONTAINING PROTEIN 1"/>
    <property type="match status" value="1"/>
</dbReference>
<dbReference type="PANTHER" id="PTHR22776">
    <property type="entry name" value="MARVEL-CONTAINING POTENTIAL LIPID RAFT-ASSOCIATED PROTEIN"/>
    <property type="match status" value="1"/>
</dbReference>
<dbReference type="Pfam" id="PF01284">
    <property type="entry name" value="MARVEL"/>
    <property type="match status" value="1"/>
</dbReference>
<dbReference type="PROSITE" id="PS51225">
    <property type="entry name" value="MARVEL"/>
    <property type="match status" value="1"/>
</dbReference>
<sequence length="173" mass="18914">MLPPPPRQPPPQARAARGAVRLQRPFLRSPLGVLRLLQLLAGAAFWITIATSKYQGPVHFALFVSVLFWLLTLGLYFLTLLGKHELVPVLGSRWLMVNVAHDVLAAALYGAATGIMSDQMQRHSYCNLKDYPLPCAYHAFLAAAVCGGVCHGLYLLSALYGCGRRCQGKQEVA</sequence>
<accession>Q9BSK0</accession>
<feature type="chain" id="PRO_0000271522" description="MARVEL domain-containing protein 1">
    <location>
        <begin position="1"/>
        <end position="173"/>
    </location>
</feature>
<feature type="topological domain" description="Cytoplasmic" evidence="2">
    <location>
        <begin position="1"/>
        <end position="29"/>
    </location>
</feature>
<feature type="transmembrane region" description="Helical" evidence="2">
    <location>
        <begin position="30"/>
        <end position="50"/>
    </location>
</feature>
<feature type="topological domain" description="Extracellular" evidence="2">
    <location>
        <begin position="51"/>
        <end position="59"/>
    </location>
</feature>
<feature type="transmembrane region" description="Helical" evidence="2">
    <location>
        <begin position="60"/>
        <end position="80"/>
    </location>
</feature>
<feature type="topological domain" description="Cytoplasmic" evidence="2">
    <location>
        <begin position="81"/>
        <end position="94"/>
    </location>
</feature>
<feature type="transmembrane region" description="Helical" evidence="2">
    <location>
        <begin position="95"/>
        <end position="115"/>
    </location>
</feature>
<feature type="topological domain" description="Extracellular" evidence="2">
    <location>
        <begin position="116"/>
        <end position="138"/>
    </location>
</feature>
<feature type="transmembrane region" description="Helical" evidence="2">
    <location>
        <begin position="139"/>
        <end position="159"/>
    </location>
</feature>
<feature type="topological domain" description="Cytoplasmic" evidence="2">
    <location>
        <begin position="160"/>
        <end position="173"/>
    </location>
</feature>
<feature type="domain" description="MARVEL" evidence="3">
    <location>
        <begin position="26"/>
        <end position="166"/>
    </location>
</feature>
<feature type="modified residue" description="N-acetylmethionine" evidence="6">
    <location>
        <position position="1"/>
    </location>
</feature>
<proteinExistence type="evidence at protein level"/>
<name>MALD1_HUMAN</name>
<gene>
    <name type="primary">MARVELD1</name>
    <name type="synonym">MRVLDC1</name>
</gene>